<sequence>MSLNRQEKAVVIEEVSAAVAKAQSIVIAEYRGLDVASVTVLRKTARESGVYLRVLKNTLARRAVAGTAFEPLSEQLTGPLIYGISEDPVSAAKVLAGFAKSNDKLVIKAGSLPNNLLNQEGVKALATMPSREELLSKLLGTMQAPIAQFVRTLNEVPTKFARGLAAVRDQKAAA</sequence>
<organism>
    <name type="scientific">Bordetella petrii (strain ATCC BAA-461 / DSM 12804 / CCUG 43448)</name>
    <dbReference type="NCBI Taxonomy" id="340100"/>
    <lineage>
        <taxon>Bacteria</taxon>
        <taxon>Pseudomonadati</taxon>
        <taxon>Pseudomonadota</taxon>
        <taxon>Betaproteobacteria</taxon>
        <taxon>Burkholderiales</taxon>
        <taxon>Alcaligenaceae</taxon>
        <taxon>Bordetella</taxon>
    </lineage>
</organism>
<evidence type="ECO:0000255" key="1">
    <source>
        <dbReference type="HAMAP-Rule" id="MF_00362"/>
    </source>
</evidence>
<evidence type="ECO:0000305" key="2"/>
<protein>
    <recommendedName>
        <fullName evidence="1">Large ribosomal subunit protein uL10</fullName>
    </recommendedName>
    <alternativeName>
        <fullName evidence="2">50S ribosomal protein L10</fullName>
    </alternativeName>
</protein>
<feature type="chain" id="PRO_1000120924" description="Large ribosomal subunit protein uL10">
    <location>
        <begin position="1"/>
        <end position="174"/>
    </location>
</feature>
<proteinExistence type="inferred from homology"/>
<accession>A9IJ29</accession>
<gene>
    <name evidence="1" type="primary">rplJ</name>
    <name type="ordered locus">Bpet4967</name>
</gene>
<name>RL10_BORPD</name>
<dbReference type="EMBL" id="AM902716">
    <property type="protein sequence ID" value="CAP45319.1"/>
    <property type="molecule type" value="Genomic_DNA"/>
</dbReference>
<dbReference type="SMR" id="A9IJ29"/>
<dbReference type="STRING" id="94624.Bpet4967"/>
<dbReference type="KEGG" id="bpt:Bpet4967"/>
<dbReference type="eggNOG" id="COG0244">
    <property type="taxonomic scope" value="Bacteria"/>
</dbReference>
<dbReference type="Proteomes" id="UP000001225">
    <property type="component" value="Chromosome"/>
</dbReference>
<dbReference type="GO" id="GO:0015934">
    <property type="term" value="C:large ribosomal subunit"/>
    <property type="evidence" value="ECO:0007669"/>
    <property type="project" value="InterPro"/>
</dbReference>
<dbReference type="GO" id="GO:0070180">
    <property type="term" value="F:large ribosomal subunit rRNA binding"/>
    <property type="evidence" value="ECO:0007669"/>
    <property type="project" value="UniProtKB-UniRule"/>
</dbReference>
<dbReference type="GO" id="GO:0003735">
    <property type="term" value="F:structural constituent of ribosome"/>
    <property type="evidence" value="ECO:0007669"/>
    <property type="project" value="InterPro"/>
</dbReference>
<dbReference type="GO" id="GO:0006412">
    <property type="term" value="P:translation"/>
    <property type="evidence" value="ECO:0007669"/>
    <property type="project" value="UniProtKB-UniRule"/>
</dbReference>
<dbReference type="CDD" id="cd05797">
    <property type="entry name" value="Ribosomal_L10"/>
    <property type="match status" value="1"/>
</dbReference>
<dbReference type="Gene3D" id="3.30.70.1730">
    <property type="match status" value="1"/>
</dbReference>
<dbReference type="Gene3D" id="6.10.250.290">
    <property type="match status" value="1"/>
</dbReference>
<dbReference type="HAMAP" id="MF_00362">
    <property type="entry name" value="Ribosomal_uL10"/>
    <property type="match status" value="1"/>
</dbReference>
<dbReference type="InterPro" id="IPR001790">
    <property type="entry name" value="Ribosomal_uL10"/>
</dbReference>
<dbReference type="InterPro" id="IPR043141">
    <property type="entry name" value="Ribosomal_uL10-like_sf"/>
</dbReference>
<dbReference type="InterPro" id="IPR022973">
    <property type="entry name" value="Ribosomal_uL10_bac"/>
</dbReference>
<dbReference type="InterPro" id="IPR047865">
    <property type="entry name" value="Ribosomal_uL10_bac_type"/>
</dbReference>
<dbReference type="InterPro" id="IPR002363">
    <property type="entry name" value="Ribosomal_uL10_CS_bac"/>
</dbReference>
<dbReference type="NCBIfam" id="NF000955">
    <property type="entry name" value="PRK00099.1-1"/>
    <property type="match status" value="1"/>
</dbReference>
<dbReference type="PANTHER" id="PTHR11560">
    <property type="entry name" value="39S RIBOSOMAL PROTEIN L10, MITOCHONDRIAL"/>
    <property type="match status" value="1"/>
</dbReference>
<dbReference type="Pfam" id="PF00466">
    <property type="entry name" value="Ribosomal_L10"/>
    <property type="match status" value="1"/>
</dbReference>
<dbReference type="SUPFAM" id="SSF160369">
    <property type="entry name" value="Ribosomal protein L10-like"/>
    <property type="match status" value="1"/>
</dbReference>
<dbReference type="PROSITE" id="PS01109">
    <property type="entry name" value="RIBOSOMAL_L10"/>
    <property type="match status" value="1"/>
</dbReference>
<keyword id="KW-0687">Ribonucleoprotein</keyword>
<keyword id="KW-0689">Ribosomal protein</keyword>
<keyword id="KW-0694">RNA-binding</keyword>
<keyword id="KW-0699">rRNA-binding</keyword>
<reference key="1">
    <citation type="journal article" date="2008" name="BMC Genomics">
        <title>The missing link: Bordetella petrii is endowed with both the metabolic versatility of environmental bacteria and virulence traits of pathogenic Bordetellae.</title>
        <authorList>
            <person name="Gross R."/>
            <person name="Guzman C.A."/>
            <person name="Sebaihia M."/>
            <person name="Martin dos Santos V.A.P."/>
            <person name="Pieper D.H."/>
            <person name="Koebnik R."/>
            <person name="Lechner M."/>
            <person name="Bartels D."/>
            <person name="Buhrmester J."/>
            <person name="Choudhuri J.V."/>
            <person name="Ebensen T."/>
            <person name="Gaigalat L."/>
            <person name="Herrmann S."/>
            <person name="Khachane A.N."/>
            <person name="Larisch C."/>
            <person name="Link S."/>
            <person name="Linke B."/>
            <person name="Meyer F."/>
            <person name="Mormann S."/>
            <person name="Nakunst D."/>
            <person name="Rueckert C."/>
            <person name="Schneiker-Bekel S."/>
            <person name="Schulze K."/>
            <person name="Voerholter F.-J."/>
            <person name="Yevsa T."/>
            <person name="Engle J.T."/>
            <person name="Goldman W.E."/>
            <person name="Puehler A."/>
            <person name="Goebel U.B."/>
            <person name="Goesmann A."/>
            <person name="Bloecker H."/>
            <person name="Kaiser O."/>
            <person name="Martinez-Arias R."/>
        </authorList>
    </citation>
    <scope>NUCLEOTIDE SEQUENCE [LARGE SCALE GENOMIC DNA]</scope>
    <source>
        <strain>ATCC BAA-461 / DSM 12804 / CCUG 43448</strain>
    </source>
</reference>
<comment type="function">
    <text evidence="1">Forms part of the ribosomal stalk, playing a central role in the interaction of the ribosome with GTP-bound translation factors.</text>
</comment>
<comment type="subunit">
    <text evidence="1">Part of the ribosomal stalk of the 50S ribosomal subunit. The N-terminus interacts with L11 and the large rRNA to form the base of the stalk. The C-terminus forms an elongated spine to which L12 dimers bind in a sequential fashion forming a multimeric L10(L12)X complex.</text>
</comment>
<comment type="similarity">
    <text evidence="1">Belongs to the universal ribosomal protein uL10 family.</text>
</comment>